<keyword id="KW-1185">Reference proteome</keyword>
<protein>
    <recommendedName>
        <fullName>Uncharacterized protein C1834.10c</fullName>
    </recommendedName>
</protein>
<feature type="chain" id="PRO_0000116749" description="Uncharacterized protein C1834.10c">
    <location>
        <begin position="1"/>
        <end position="178"/>
    </location>
</feature>
<proteinExistence type="predicted"/>
<organism>
    <name type="scientific">Schizosaccharomyces pombe (strain 972 / ATCC 24843)</name>
    <name type="common">Fission yeast</name>
    <dbReference type="NCBI Taxonomy" id="284812"/>
    <lineage>
        <taxon>Eukaryota</taxon>
        <taxon>Fungi</taxon>
        <taxon>Dikarya</taxon>
        <taxon>Ascomycota</taxon>
        <taxon>Taphrinomycotina</taxon>
        <taxon>Schizosaccharomycetes</taxon>
        <taxon>Schizosaccharomycetales</taxon>
        <taxon>Schizosaccharomycetaceae</taxon>
        <taxon>Schizosaccharomyces</taxon>
    </lineage>
</organism>
<name>YFVA_SCHPO</name>
<gene>
    <name type="ORF">SPAC1834.10c</name>
</gene>
<reference key="1">
    <citation type="journal article" date="2002" name="Nature">
        <title>The genome sequence of Schizosaccharomyces pombe.</title>
        <authorList>
            <person name="Wood V."/>
            <person name="Gwilliam R."/>
            <person name="Rajandream M.A."/>
            <person name="Lyne M.H."/>
            <person name="Lyne R."/>
            <person name="Stewart A."/>
            <person name="Sgouros J.G."/>
            <person name="Peat N."/>
            <person name="Hayles J."/>
            <person name="Baker S.G."/>
            <person name="Basham D."/>
            <person name="Bowman S."/>
            <person name="Brooks K."/>
            <person name="Brown D."/>
            <person name="Brown S."/>
            <person name="Chillingworth T."/>
            <person name="Churcher C.M."/>
            <person name="Collins M."/>
            <person name="Connor R."/>
            <person name="Cronin A."/>
            <person name="Davis P."/>
            <person name="Feltwell T."/>
            <person name="Fraser A."/>
            <person name="Gentles S."/>
            <person name="Goble A."/>
            <person name="Hamlin N."/>
            <person name="Harris D.E."/>
            <person name="Hidalgo J."/>
            <person name="Hodgson G."/>
            <person name="Holroyd S."/>
            <person name="Hornsby T."/>
            <person name="Howarth S."/>
            <person name="Huckle E.J."/>
            <person name="Hunt S."/>
            <person name="Jagels K."/>
            <person name="James K.D."/>
            <person name="Jones L."/>
            <person name="Jones M."/>
            <person name="Leather S."/>
            <person name="McDonald S."/>
            <person name="McLean J."/>
            <person name="Mooney P."/>
            <person name="Moule S."/>
            <person name="Mungall K.L."/>
            <person name="Murphy L.D."/>
            <person name="Niblett D."/>
            <person name="Odell C."/>
            <person name="Oliver K."/>
            <person name="O'Neil S."/>
            <person name="Pearson D."/>
            <person name="Quail M.A."/>
            <person name="Rabbinowitsch E."/>
            <person name="Rutherford K.M."/>
            <person name="Rutter S."/>
            <person name="Saunders D."/>
            <person name="Seeger K."/>
            <person name="Sharp S."/>
            <person name="Skelton J."/>
            <person name="Simmonds M.N."/>
            <person name="Squares R."/>
            <person name="Squares S."/>
            <person name="Stevens K."/>
            <person name="Taylor K."/>
            <person name="Taylor R.G."/>
            <person name="Tivey A."/>
            <person name="Walsh S.V."/>
            <person name="Warren T."/>
            <person name="Whitehead S."/>
            <person name="Woodward J.R."/>
            <person name="Volckaert G."/>
            <person name="Aert R."/>
            <person name="Robben J."/>
            <person name="Grymonprez B."/>
            <person name="Weltjens I."/>
            <person name="Vanstreels E."/>
            <person name="Rieger M."/>
            <person name="Schaefer M."/>
            <person name="Mueller-Auer S."/>
            <person name="Gabel C."/>
            <person name="Fuchs M."/>
            <person name="Duesterhoeft A."/>
            <person name="Fritzc C."/>
            <person name="Holzer E."/>
            <person name="Moestl D."/>
            <person name="Hilbert H."/>
            <person name="Borzym K."/>
            <person name="Langer I."/>
            <person name="Beck A."/>
            <person name="Lehrach H."/>
            <person name="Reinhardt R."/>
            <person name="Pohl T.M."/>
            <person name="Eger P."/>
            <person name="Zimmermann W."/>
            <person name="Wedler H."/>
            <person name="Wambutt R."/>
            <person name="Purnelle B."/>
            <person name="Goffeau A."/>
            <person name="Cadieu E."/>
            <person name="Dreano S."/>
            <person name="Gloux S."/>
            <person name="Lelaure V."/>
            <person name="Mottier S."/>
            <person name="Galibert F."/>
            <person name="Aves S.J."/>
            <person name="Xiang Z."/>
            <person name="Hunt C."/>
            <person name="Moore K."/>
            <person name="Hurst S.M."/>
            <person name="Lucas M."/>
            <person name="Rochet M."/>
            <person name="Gaillardin C."/>
            <person name="Tallada V.A."/>
            <person name="Garzon A."/>
            <person name="Thode G."/>
            <person name="Daga R.R."/>
            <person name="Cruzado L."/>
            <person name="Jimenez J."/>
            <person name="Sanchez M."/>
            <person name="del Rey F."/>
            <person name="Benito J."/>
            <person name="Dominguez A."/>
            <person name="Revuelta J.L."/>
            <person name="Moreno S."/>
            <person name="Armstrong J."/>
            <person name="Forsburg S.L."/>
            <person name="Cerutti L."/>
            <person name="Lowe T."/>
            <person name="McCombie W.R."/>
            <person name="Paulsen I."/>
            <person name="Potashkin J."/>
            <person name="Shpakovski G.V."/>
            <person name="Ussery D."/>
            <person name="Barrell B.G."/>
            <person name="Nurse P."/>
        </authorList>
    </citation>
    <scope>NUCLEOTIDE SEQUENCE [LARGE SCALE GENOMIC DNA]</scope>
    <source>
        <strain>972 / ATCC 24843</strain>
    </source>
</reference>
<sequence length="178" mass="19650">MNMPSEILLGARRWFASTSFSLAAVYDAPLKKAIGNIKKFSIGSLGLTYMISPVMLLLDAGGLSLGTRMSMVFLACTTTSLSTAIIHWAAKSYVSEATLKGNVLSLNTFNILGKKRLSQYTLDKLKIPDTNNSRPFANLESTTVPKRYFYLHPELATPIFNAIRQAQQPKQINKNDSK</sequence>
<dbReference type="EMBL" id="CU329670">
    <property type="protein sequence ID" value="CAB75778.1"/>
    <property type="molecule type" value="Genomic_DNA"/>
</dbReference>
<dbReference type="PIR" id="T50121">
    <property type="entry name" value="T50121"/>
</dbReference>
<dbReference type="RefSeq" id="NP_594689.1">
    <property type="nucleotide sequence ID" value="NM_001020118.2"/>
</dbReference>
<dbReference type="iPTMnet" id="Q9P7Q5"/>
<dbReference type="PaxDb" id="4896-SPAC1834.10c.1"/>
<dbReference type="EnsemblFungi" id="SPAC1834.10c.1">
    <property type="protein sequence ID" value="SPAC1834.10c.1:pep"/>
    <property type="gene ID" value="SPAC1834.10c"/>
</dbReference>
<dbReference type="KEGG" id="spo:2542624"/>
<dbReference type="PomBase" id="SPAC1834.10c"/>
<dbReference type="VEuPathDB" id="FungiDB:SPAC1834.10c"/>
<dbReference type="eggNOG" id="ENOG502S8CE">
    <property type="taxonomic scope" value="Eukaryota"/>
</dbReference>
<dbReference type="HOGENOM" id="CLU_1579432_0_0_1"/>
<dbReference type="InParanoid" id="Q9P7Q5"/>
<dbReference type="OMA" id="RLIMIST"/>
<dbReference type="PRO" id="PR:Q9P7Q5"/>
<dbReference type="Proteomes" id="UP000002485">
    <property type="component" value="Chromosome I"/>
</dbReference>
<dbReference type="GO" id="GO:0005743">
    <property type="term" value="C:mitochondrial inner membrane"/>
    <property type="evidence" value="ECO:0000266"/>
    <property type="project" value="PomBase"/>
</dbReference>
<dbReference type="GO" id="GO:0031966">
    <property type="term" value="C:mitochondrial membrane"/>
    <property type="evidence" value="ECO:0000318"/>
    <property type="project" value="GO_Central"/>
</dbReference>
<dbReference type="GO" id="GO:0005739">
    <property type="term" value="C:mitochondrion"/>
    <property type="evidence" value="ECO:0007005"/>
    <property type="project" value="PomBase"/>
</dbReference>
<dbReference type="GO" id="GO:0033615">
    <property type="term" value="P:mitochondrial proton-transporting ATP synthase complex assembly"/>
    <property type="evidence" value="ECO:0000318"/>
    <property type="project" value="GO_Central"/>
</dbReference>
<dbReference type="InterPro" id="IPR009724">
    <property type="entry name" value="TMEM70"/>
</dbReference>
<dbReference type="InterPro" id="IPR045325">
    <property type="entry name" value="TMEM70/TMEM186/TMEM223"/>
</dbReference>
<dbReference type="PANTHER" id="PTHR13281">
    <property type="entry name" value="TRANSMEMBRANE PROTEIN 70, MITOCHONDRIAL"/>
    <property type="match status" value="1"/>
</dbReference>
<dbReference type="PANTHER" id="PTHR13281:SF0">
    <property type="entry name" value="TRANSMEMBRANE PROTEIN 70, MITOCHONDRIAL"/>
    <property type="match status" value="1"/>
</dbReference>
<dbReference type="Pfam" id="PF06979">
    <property type="entry name" value="TMEM70"/>
    <property type="match status" value="1"/>
</dbReference>
<accession>Q9P7Q5</accession>